<feature type="chain" id="PRO_0000437965" description="Transcription factor sem-2" evidence="5">
    <location>
        <begin position="1"/>
        <end position="404"/>
    </location>
</feature>
<feature type="DNA-binding region" description="HMG box" evidence="1">
    <location>
        <begin position="93"/>
        <end position="161"/>
    </location>
</feature>
<feature type="region of interest" description="Disordered" evidence="2">
    <location>
        <begin position="158"/>
        <end position="218"/>
    </location>
</feature>
<feature type="region of interest" description="Disordered" evidence="2">
    <location>
        <begin position="321"/>
        <end position="359"/>
    </location>
</feature>
<feature type="compositionally biased region" description="Low complexity" evidence="2">
    <location>
        <begin position="177"/>
        <end position="199"/>
    </location>
</feature>
<feature type="compositionally biased region" description="Polar residues" evidence="2">
    <location>
        <begin position="207"/>
        <end position="218"/>
    </location>
</feature>
<feature type="compositionally biased region" description="Polar residues" evidence="2">
    <location>
        <begin position="347"/>
        <end position="359"/>
    </location>
</feature>
<gene>
    <name evidence="8" type="primary">sem-2</name>
    <name evidence="8" type="ORF">C32E12.5</name>
</gene>
<accession>Q8T3B9</accession>
<dbReference type="EMBL" id="BX284601">
    <property type="protein sequence ID" value="CCD61581.1"/>
    <property type="molecule type" value="Genomic_DNA"/>
</dbReference>
<dbReference type="RefSeq" id="NP_740846.1">
    <property type="nucleotide sequence ID" value="NM_170859.7"/>
</dbReference>
<dbReference type="SMR" id="Q8T3B9"/>
<dbReference type="FunCoup" id="Q8T3B9">
    <property type="interactions" value="95"/>
</dbReference>
<dbReference type="IntAct" id="Q8T3B9">
    <property type="interactions" value="22"/>
</dbReference>
<dbReference type="STRING" id="6239.C32E12.5.2"/>
<dbReference type="PaxDb" id="6239-C32E12.5.1"/>
<dbReference type="PeptideAtlas" id="Q8T3B9"/>
<dbReference type="EnsemblMetazoa" id="C32E12.5.1">
    <property type="protein sequence ID" value="C32E12.5.1"/>
    <property type="gene ID" value="WBGene00004771"/>
</dbReference>
<dbReference type="EnsemblMetazoa" id="C32E12.5.2">
    <property type="protein sequence ID" value="C32E12.5.2"/>
    <property type="gene ID" value="WBGene00004771"/>
</dbReference>
<dbReference type="EnsemblMetazoa" id="C32E12.5.3">
    <property type="protein sequence ID" value="C32E12.5.3"/>
    <property type="gene ID" value="WBGene00004771"/>
</dbReference>
<dbReference type="GeneID" id="172162"/>
<dbReference type="KEGG" id="cel:CELE_C32E12.5"/>
<dbReference type="UCSC" id="C32E12.5.1">
    <property type="organism name" value="c. elegans"/>
</dbReference>
<dbReference type="AGR" id="WB:WBGene00004771"/>
<dbReference type="CTD" id="172162"/>
<dbReference type="WormBase" id="C32E12.5">
    <property type="protein sequence ID" value="CE30497"/>
    <property type="gene ID" value="WBGene00004771"/>
    <property type="gene designation" value="sem-2"/>
</dbReference>
<dbReference type="eggNOG" id="KOG0527">
    <property type="taxonomic scope" value="Eukaryota"/>
</dbReference>
<dbReference type="HOGENOM" id="CLU_681941_0_0_1"/>
<dbReference type="InParanoid" id="Q8T3B9"/>
<dbReference type="OMA" id="EFGHAPL"/>
<dbReference type="OrthoDB" id="6247875at2759"/>
<dbReference type="Reactome" id="R-CEL-3769402">
    <property type="pathway name" value="Deactivation of the beta-catenin transactivating complex"/>
</dbReference>
<dbReference type="SignaLink" id="Q8T3B9"/>
<dbReference type="PRO" id="PR:Q8T3B9"/>
<dbReference type="Proteomes" id="UP000001940">
    <property type="component" value="Chromosome I"/>
</dbReference>
<dbReference type="Bgee" id="WBGene00004771">
    <property type="expression patterns" value="Expressed in pharyngeal muscle cell (C elegans) and 16 other cell types or tissues"/>
</dbReference>
<dbReference type="GO" id="GO:0005634">
    <property type="term" value="C:nucleus"/>
    <property type="evidence" value="ECO:0000314"/>
    <property type="project" value="WormBase"/>
</dbReference>
<dbReference type="GO" id="GO:0003677">
    <property type="term" value="F:DNA binding"/>
    <property type="evidence" value="ECO:0000304"/>
    <property type="project" value="UniProtKB"/>
</dbReference>
<dbReference type="GO" id="GO:0001228">
    <property type="term" value="F:DNA-binding transcription activator activity, RNA polymerase II-specific"/>
    <property type="evidence" value="ECO:0000318"/>
    <property type="project" value="GO_Central"/>
</dbReference>
<dbReference type="GO" id="GO:0000978">
    <property type="term" value="F:RNA polymerase II cis-regulatory region sequence-specific DNA binding"/>
    <property type="evidence" value="ECO:0000318"/>
    <property type="project" value="GO_Central"/>
</dbReference>
<dbReference type="GO" id="GO:0007420">
    <property type="term" value="P:brain development"/>
    <property type="evidence" value="ECO:0000318"/>
    <property type="project" value="GO_Central"/>
</dbReference>
<dbReference type="GO" id="GO:0007501">
    <property type="term" value="P:mesodermal cell fate specification"/>
    <property type="evidence" value="ECO:0000314"/>
    <property type="project" value="UniProtKB"/>
</dbReference>
<dbReference type="GO" id="GO:0048626">
    <property type="term" value="P:myoblast fate specification"/>
    <property type="evidence" value="ECO:0000315"/>
    <property type="project" value="UniProtKB"/>
</dbReference>
<dbReference type="GO" id="GO:0000122">
    <property type="term" value="P:negative regulation of transcription by RNA polymerase II"/>
    <property type="evidence" value="ECO:0000318"/>
    <property type="project" value="GO_Central"/>
</dbReference>
<dbReference type="GO" id="GO:0030182">
    <property type="term" value="P:neuron differentiation"/>
    <property type="evidence" value="ECO:0000318"/>
    <property type="project" value="GO_Central"/>
</dbReference>
<dbReference type="GO" id="GO:1901046">
    <property type="term" value="P:positive regulation of egg-laying behavior"/>
    <property type="evidence" value="ECO:0000315"/>
    <property type="project" value="UniProtKB"/>
</dbReference>
<dbReference type="GO" id="GO:0040019">
    <property type="term" value="P:positive regulation of embryonic development"/>
    <property type="evidence" value="ECO:0000315"/>
    <property type="project" value="UniProtKB"/>
</dbReference>
<dbReference type="GO" id="GO:0048337">
    <property type="term" value="P:positive regulation of mesodermal cell fate specification"/>
    <property type="evidence" value="ECO:0000315"/>
    <property type="project" value="UniProtKB"/>
</dbReference>
<dbReference type="GO" id="GO:0048582">
    <property type="term" value="P:positive regulation of post-embryonic development"/>
    <property type="evidence" value="ECO:0000315"/>
    <property type="project" value="UniProtKB"/>
</dbReference>
<dbReference type="GO" id="GO:0045944">
    <property type="term" value="P:positive regulation of transcription by RNA polymerase II"/>
    <property type="evidence" value="ECO:0000318"/>
    <property type="project" value="GO_Central"/>
</dbReference>
<dbReference type="GO" id="GO:0040026">
    <property type="term" value="P:positive regulation of vulval development"/>
    <property type="evidence" value="ECO:0000315"/>
    <property type="project" value="UniProtKB"/>
</dbReference>
<dbReference type="CDD" id="cd22029">
    <property type="entry name" value="HMG-box_SoxC"/>
    <property type="match status" value="1"/>
</dbReference>
<dbReference type="FunFam" id="1.10.30.10:FF:000007">
    <property type="entry name" value="Transcription factor SOX"/>
    <property type="match status" value="1"/>
</dbReference>
<dbReference type="Gene3D" id="1.10.30.10">
    <property type="entry name" value="High mobility group box domain"/>
    <property type="match status" value="1"/>
</dbReference>
<dbReference type="InterPro" id="IPR009071">
    <property type="entry name" value="HMG_box_dom"/>
</dbReference>
<dbReference type="InterPro" id="IPR036910">
    <property type="entry name" value="HMG_box_dom_sf"/>
</dbReference>
<dbReference type="InterPro" id="IPR050140">
    <property type="entry name" value="SRY-related_HMG-box_TF-like"/>
</dbReference>
<dbReference type="PANTHER" id="PTHR10270">
    <property type="entry name" value="SOX TRANSCRIPTION FACTOR"/>
    <property type="match status" value="1"/>
</dbReference>
<dbReference type="PANTHER" id="PTHR10270:SF323">
    <property type="entry name" value="TRANSCRIPTION FACTOR SOX-14-RELATED"/>
    <property type="match status" value="1"/>
</dbReference>
<dbReference type="Pfam" id="PF00505">
    <property type="entry name" value="HMG_box"/>
    <property type="match status" value="1"/>
</dbReference>
<dbReference type="SMART" id="SM00398">
    <property type="entry name" value="HMG"/>
    <property type="match status" value="1"/>
</dbReference>
<dbReference type="SUPFAM" id="SSF47095">
    <property type="entry name" value="HMG-box"/>
    <property type="match status" value="1"/>
</dbReference>
<dbReference type="PROSITE" id="PS50118">
    <property type="entry name" value="HMG_BOX_2"/>
    <property type="match status" value="1"/>
</dbReference>
<protein>
    <recommendedName>
        <fullName evidence="6">Transcription factor sem-2</fullName>
    </recommendedName>
    <alternativeName>
        <fullName evidence="8">Sex muscle abnormal protein 2</fullName>
    </alternativeName>
</protein>
<comment type="function">
    <text evidence="3 4">Probable transcription factor required for embryogenesis, vulval development and cell fate specification of the postembryonic mesoderm (also known as the M lineage) (PubMed:21307099). Specifically, required for the specification of sex myoblast cells and their development into the muscles that are necessary for egg-laying (PubMed:21307099). In addition, may be involved in RME GABAergic motor neuron progenitor cell fate specification (PubMed:26153233).</text>
</comment>
<comment type="subcellular location">
    <subcellularLocation>
        <location evidence="3">Nucleus</location>
    </subcellularLocation>
</comment>
<comment type="developmental stage">
    <text evidence="3 4">First expressed in blastomeres in early gastrulating embryos (PubMed:21307099, PubMed:26153233). Expression continues throughout embryonic development with expression in neuronal and non-neuronal progenitors (PubMed:21307099, PubMed:26153233). During larval development, it is expressed in cells including vulval, hypodermal and intestinal cells, and is only expressed in RMH motor neurons (PubMed:21307099, PubMed:26153233). First expressed in the progenitor sex myoblasts at the 16-M cell stage of mesoderm development in hermaphrodite larvae and thereafter in descendants (PubMed:21307099).</text>
</comment>
<comment type="disruption phenotype">
    <text evidence="3">Embryonic lethal whereby embryos arrest at the three-fold stage of embryogenesis. Embryos initially develop normally until the late comma stage where a delay in the elongation process culminates in severe morphological defects. RNAi-mediated knockdown results in 98% egg-laying defective mutants with muscles lacking the egg-laying muscle specific protein egl-15. In addition, mutants also exhibit a multiple vulvae phenotype with animals having two or three vulvae. Double knockdown with let-381, sys-1, hlh-1 or fozi-1 results in no sex myoblast production.</text>
</comment>
<evidence type="ECO:0000255" key="1">
    <source>
        <dbReference type="PROSITE-ProRule" id="PRU00267"/>
    </source>
</evidence>
<evidence type="ECO:0000256" key="2">
    <source>
        <dbReference type="SAM" id="MobiDB-lite"/>
    </source>
</evidence>
<evidence type="ECO:0000269" key="3">
    <source>
    </source>
</evidence>
<evidence type="ECO:0000269" key="4">
    <source>
    </source>
</evidence>
<evidence type="ECO:0000305" key="5"/>
<evidence type="ECO:0000305" key="6">
    <source>
    </source>
</evidence>
<evidence type="ECO:0000312" key="7">
    <source>
        <dbReference type="Proteomes" id="UP000001940"/>
    </source>
</evidence>
<evidence type="ECO:0000312" key="8">
    <source>
        <dbReference type="WormBase" id="C32E12.5"/>
    </source>
</evidence>
<reference evidence="7" key="1">
    <citation type="journal article" date="1998" name="Science">
        <title>Genome sequence of the nematode C. elegans: a platform for investigating biology.</title>
        <authorList>
            <consortium name="The C. elegans sequencing consortium"/>
        </authorList>
    </citation>
    <scope>NUCLEOTIDE SEQUENCE [LARGE SCALE GENOMIC DNA]</scope>
    <source>
        <strain evidence="7">Bristol N2</strain>
    </source>
</reference>
<reference evidence="5" key="2">
    <citation type="journal article" date="2011" name="Development">
        <title>The C. elegans SoxC protein SEM-2 opposes differentiation factors to promote a proliferative blast cell fate in the postembryonic mesoderm.</title>
        <authorList>
            <person name="Tian C."/>
            <person name="Shi H."/>
            <person name="Colledge C."/>
            <person name="Stern M."/>
            <person name="Waterston R."/>
            <person name="Liu J."/>
        </authorList>
    </citation>
    <scope>FUNCTION</scope>
    <scope>SUBCELLULAR LOCATION</scope>
    <scope>DEVELOPMENTAL STAGE</scope>
    <scope>DISRUPTION PHENOTYPE</scope>
</reference>
<reference evidence="5" key="3">
    <citation type="journal article" date="2015" name="Development">
        <title>C. elegans SoxB genes are dispensable for embryonic neurogenesis but required for terminal differentiation of specific neuron types.</title>
        <authorList>
            <person name="Vidal B."/>
            <person name="Santella A."/>
            <person name="Serrano-Saiz E."/>
            <person name="Bao Z."/>
            <person name="Chuang C.F."/>
            <person name="Hobert O."/>
        </authorList>
    </citation>
    <scope>FUNCTION</scope>
    <scope>DEVELOPMENTAL STAGE</scope>
</reference>
<sequence length="404" mass="44625">MDLQKPPNFMLDCGMAPHMMPPINWAAAAIAVASSTSGATNATSSNSVATSQQLQHHPYGTAAGGYKHAQQAIPKSVTPYSDATNCKKSSNHIKRPMNAFMVWSQMERRKICEHQPDMHNAEISKQLGSRWRSLTDEEKAPFVAEAERLRVCHMQEYPDYKYKPRKKPKKNPDGTLQQPAQPQAPQQQQAPPRGASPQARQRKRPNTDQQSETQQFQNFKSVKVEQDWMGNAHMSHAQKMPFHPSYPSPSEFGHAPLTPESGFYDDYFTQQHHQQHFASQHHNSAGSPLRMTNLGMDMGMPPQMMGHNSGFGAGNHPFYLHTSPPSVDQDDMRSLSSGSSGYADCSASEQSTSSPNSAGVVTMATAATTTTHLDDLEQICPTVTTGELVNYPWSDALGIDINFS</sequence>
<proteinExistence type="evidence at transcript level"/>
<keyword id="KW-0217">Developmental protein</keyword>
<keyword id="KW-0238">DNA-binding</keyword>
<keyword id="KW-0539">Nucleus</keyword>
<keyword id="KW-1185">Reference proteome</keyword>
<keyword id="KW-0804">Transcription</keyword>
<organism evidence="7">
    <name type="scientific">Caenorhabditis elegans</name>
    <dbReference type="NCBI Taxonomy" id="6239"/>
    <lineage>
        <taxon>Eukaryota</taxon>
        <taxon>Metazoa</taxon>
        <taxon>Ecdysozoa</taxon>
        <taxon>Nematoda</taxon>
        <taxon>Chromadorea</taxon>
        <taxon>Rhabditida</taxon>
        <taxon>Rhabditina</taxon>
        <taxon>Rhabditomorpha</taxon>
        <taxon>Rhabditoidea</taxon>
        <taxon>Rhabditidae</taxon>
        <taxon>Peloderinae</taxon>
        <taxon>Caenorhabditis</taxon>
    </lineage>
</organism>
<name>SEM2_CAEEL</name>